<comment type="function">
    <text>Catalyzes the isomerization between 2-isopropylmalate and 3-isopropylmalate, via the formation of 2-isopropylmaleate.</text>
</comment>
<comment type="catalytic activity">
    <reaction>
        <text>(2R,3S)-3-isopropylmalate = (2S)-2-isopropylmalate</text>
        <dbReference type="Rhea" id="RHEA:32287"/>
        <dbReference type="ChEBI" id="CHEBI:1178"/>
        <dbReference type="ChEBI" id="CHEBI:35121"/>
        <dbReference type="EC" id="4.2.1.33"/>
    </reaction>
</comment>
<comment type="cofactor">
    <cofactor evidence="1">
        <name>[4Fe-4S] cluster</name>
        <dbReference type="ChEBI" id="CHEBI:49883"/>
    </cofactor>
    <text evidence="1">Binds 1 [4Fe-4S] cluster per subunit.</text>
</comment>
<comment type="pathway">
    <text>Amino-acid biosynthesis; L-leucine biosynthesis; L-leucine from 3-methyl-2-oxobutanoate: step 2/4.</text>
</comment>
<comment type="subunit">
    <text evidence="1">Monomer.</text>
</comment>
<comment type="similarity">
    <text evidence="3">Belongs to the aconitase/IPM isomerase family.</text>
</comment>
<keyword id="KW-0004">4Fe-4S</keyword>
<keyword id="KW-0028">Amino-acid biosynthesis</keyword>
<keyword id="KW-0100">Branched-chain amino acid biosynthesis</keyword>
<keyword id="KW-0408">Iron</keyword>
<keyword id="KW-0411">Iron-sulfur</keyword>
<keyword id="KW-0432">Leucine biosynthesis</keyword>
<keyword id="KW-0456">Lyase</keyword>
<keyword id="KW-0479">Metal-binding</keyword>
<name>LEUC_RHINI</name>
<gene>
    <name type="primary">LEU1</name>
</gene>
<evidence type="ECO:0000250" key="1"/>
<evidence type="ECO:0000256" key="2">
    <source>
        <dbReference type="SAM" id="MobiDB-lite"/>
    </source>
</evidence>
<evidence type="ECO:0000305" key="3"/>
<reference key="1">
    <citation type="journal article" date="1996" name="Biosci. Biotechnol. Biochem.">
        <title>Cloning and characterization of the Rhizopus niveus leu1 gene and its use for homologous transformation.</title>
        <authorList>
            <person name="Takaya N."/>
            <person name="Yanai K."/>
            <person name="Horiuchi H."/>
            <person name="Ohta A."/>
            <person name="Takagi M."/>
        </authorList>
    </citation>
    <scope>NUCLEOTIDE SEQUENCE [GENOMIC DNA]</scope>
    <source>
        <strain>NBRC 4810 / AS 3.4817</strain>
    </source>
</reference>
<protein>
    <recommendedName>
        <fullName>3-isopropylmalate dehydratase</fullName>
        <ecNumber>4.2.1.33</ecNumber>
    </recommendedName>
    <alternativeName>
        <fullName>Alpha-IPM isomerase</fullName>
        <shortName>IPMI</shortName>
    </alternativeName>
    <alternativeName>
        <fullName>Isopropylmalate isomerase</fullName>
    </alternativeName>
</protein>
<proteinExistence type="inferred from homology"/>
<sequence>MARTLYDKVLEDHIIDRQEYGTCLIYIDRHLVHEVTSPQAFEGLRNAGRPVRRPDCTLATVDHNIPTSPRRNFKDIATFIKEGDSSTQCETLGENIEAFGLTYFGMEDSRQGIVHVIGPEQGFTLPGTTVVCGDSHTSTHGAFGALAFGIGTSEVEHVLATQTLLQKKSKNMRIRVEGKPSAGVTSKDIALHVIGVIGTAGGTGCVIEFCGEANESLSMESRMSICNMSIEAGARAGMIAPDDITFEYLCNKPLASKGEEWDRAVAYWKTLKFDADAQYDITVDIKASDIAPTVTWGTSPQDVAPITGKTPDLDSIADPLRRLAVQRALDYIGIASNTPLEGVKIDKVFIGSCTNSRIEDLGPAAAIVKGKRVADWVDAMVVPGSALVKRQAERKGLDKIFQEAGFNWREAGCSMCLGMNPDQLKPGERCASTSNRNFKGRQGAGGRTHLLSPAMAAAAGIKGCLTDVRHMEVAGIALTGNESPRQEVVASKYDGSPEVFKSTQDTTPAVKPPQPASDSSSSGGMPAFTTLKGYAAPLDISNIDTDMIIPKQFLKTIKRTGLGSALFYSLRFDPQTGAENPAFVLKERTFRQARILVCTGPNFGCGSSREHAPWAFNDFGIRCILAPSFADIFFNNCFKNGMLPIVLPQAQLEAIAAEAQKGVEVEVDLVQQIVRNPGGEVSFDVEEFRKHCLVNGLDDIGLTMQKADKIAQFETKRTQTWPWLDGKGYKGKATKIEINGGQQKKAKLDW</sequence>
<dbReference type="EC" id="4.2.1.33"/>
<dbReference type="EMBL" id="D63833">
    <property type="protein sequence ID" value="BAA09893.1"/>
    <property type="molecule type" value="Genomic_DNA"/>
</dbReference>
<dbReference type="SMR" id="P55811"/>
<dbReference type="UniPathway" id="UPA00048">
    <property type="reaction ID" value="UER00071"/>
</dbReference>
<dbReference type="GO" id="GO:0009316">
    <property type="term" value="C:3-isopropylmalate dehydratase complex"/>
    <property type="evidence" value="ECO:0007669"/>
    <property type="project" value="InterPro"/>
</dbReference>
<dbReference type="GO" id="GO:0003861">
    <property type="term" value="F:3-isopropylmalate dehydratase activity"/>
    <property type="evidence" value="ECO:0007669"/>
    <property type="project" value="UniProtKB-EC"/>
</dbReference>
<dbReference type="GO" id="GO:0051539">
    <property type="term" value="F:4 iron, 4 sulfur cluster binding"/>
    <property type="evidence" value="ECO:0007669"/>
    <property type="project" value="UniProtKB-KW"/>
</dbReference>
<dbReference type="GO" id="GO:0046872">
    <property type="term" value="F:metal ion binding"/>
    <property type="evidence" value="ECO:0007669"/>
    <property type="project" value="UniProtKB-KW"/>
</dbReference>
<dbReference type="GO" id="GO:0009098">
    <property type="term" value="P:L-leucine biosynthetic process"/>
    <property type="evidence" value="ECO:0007669"/>
    <property type="project" value="UniProtKB-UniPathway"/>
</dbReference>
<dbReference type="CDD" id="cd01583">
    <property type="entry name" value="IPMI"/>
    <property type="match status" value="1"/>
</dbReference>
<dbReference type="CDD" id="cd01577">
    <property type="entry name" value="IPMI_Swivel"/>
    <property type="match status" value="1"/>
</dbReference>
<dbReference type="FunFam" id="3.30.499.10:FF:000006">
    <property type="entry name" value="3-isopropylmalate dehydratase large subunit"/>
    <property type="match status" value="1"/>
</dbReference>
<dbReference type="FunFam" id="3.30.499.10:FF:000007">
    <property type="entry name" value="3-isopropylmalate dehydratase large subunit"/>
    <property type="match status" value="1"/>
</dbReference>
<dbReference type="FunFam" id="3.20.19.10:FF:000003">
    <property type="entry name" value="3-isopropylmalate dehydratase small subunit"/>
    <property type="match status" value="1"/>
</dbReference>
<dbReference type="Gene3D" id="3.30.499.10">
    <property type="entry name" value="Aconitase, domain 3"/>
    <property type="match status" value="2"/>
</dbReference>
<dbReference type="Gene3D" id="3.20.19.10">
    <property type="entry name" value="Aconitase, domain 4"/>
    <property type="match status" value="1"/>
</dbReference>
<dbReference type="HAMAP" id="MF_01026">
    <property type="entry name" value="LeuC_type1"/>
    <property type="match status" value="1"/>
</dbReference>
<dbReference type="HAMAP" id="MF_01031">
    <property type="entry name" value="LeuD_type1"/>
    <property type="match status" value="1"/>
</dbReference>
<dbReference type="InterPro" id="IPR004430">
    <property type="entry name" value="3-IsopropMal_deHydase_lsu"/>
</dbReference>
<dbReference type="InterPro" id="IPR004431">
    <property type="entry name" value="3-IsopropMal_deHydase_ssu"/>
</dbReference>
<dbReference type="InterPro" id="IPR012235">
    <property type="entry name" value="3-IsopropMal_deHydtase_ssu/lsu"/>
</dbReference>
<dbReference type="InterPro" id="IPR015931">
    <property type="entry name" value="Acnase/IPM_dHydase_lsu_aba_1/3"/>
</dbReference>
<dbReference type="InterPro" id="IPR001030">
    <property type="entry name" value="Acoase/IPM_deHydtase_lsu_aba"/>
</dbReference>
<dbReference type="InterPro" id="IPR015928">
    <property type="entry name" value="Aconitase/3IPM_dehydase_swvl"/>
</dbReference>
<dbReference type="InterPro" id="IPR018136">
    <property type="entry name" value="Aconitase_4Fe-4S_BS"/>
</dbReference>
<dbReference type="InterPro" id="IPR036008">
    <property type="entry name" value="Aconitase_4Fe-4S_dom"/>
</dbReference>
<dbReference type="InterPro" id="IPR000573">
    <property type="entry name" value="AconitaseA/IPMdHydase_ssu_swvl"/>
</dbReference>
<dbReference type="InterPro" id="IPR050067">
    <property type="entry name" value="IPM_dehydratase_rel_enz"/>
</dbReference>
<dbReference type="InterPro" id="IPR033941">
    <property type="entry name" value="IPMI_cat"/>
</dbReference>
<dbReference type="InterPro" id="IPR033940">
    <property type="entry name" value="IPMI_Swivel"/>
</dbReference>
<dbReference type="NCBIfam" id="TIGR00170">
    <property type="entry name" value="leuC"/>
    <property type="match status" value="1"/>
</dbReference>
<dbReference type="NCBIfam" id="TIGR00171">
    <property type="entry name" value="leuD"/>
    <property type="match status" value="1"/>
</dbReference>
<dbReference type="NCBIfam" id="NF002458">
    <property type="entry name" value="PRK01641.1"/>
    <property type="match status" value="1"/>
</dbReference>
<dbReference type="NCBIfam" id="NF004016">
    <property type="entry name" value="PRK05478.1"/>
    <property type="match status" value="1"/>
</dbReference>
<dbReference type="NCBIfam" id="NF009116">
    <property type="entry name" value="PRK12466.1"/>
    <property type="match status" value="1"/>
</dbReference>
<dbReference type="PANTHER" id="PTHR43822:SF9">
    <property type="entry name" value="3-ISOPROPYLMALATE DEHYDRATASE"/>
    <property type="match status" value="1"/>
</dbReference>
<dbReference type="PANTHER" id="PTHR43822">
    <property type="entry name" value="HOMOACONITASE, MITOCHONDRIAL-RELATED"/>
    <property type="match status" value="1"/>
</dbReference>
<dbReference type="Pfam" id="PF00330">
    <property type="entry name" value="Aconitase"/>
    <property type="match status" value="1"/>
</dbReference>
<dbReference type="Pfam" id="PF00694">
    <property type="entry name" value="Aconitase_C"/>
    <property type="match status" value="1"/>
</dbReference>
<dbReference type="PIRSF" id="PIRSF001418">
    <property type="entry name" value="ACN"/>
    <property type="match status" value="1"/>
</dbReference>
<dbReference type="PRINTS" id="PR00415">
    <property type="entry name" value="ACONITASE"/>
</dbReference>
<dbReference type="SUPFAM" id="SSF53732">
    <property type="entry name" value="Aconitase iron-sulfur domain"/>
    <property type="match status" value="1"/>
</dbReference>
<dbReference type="SUPFAM" id="SSF52016">
    <property type="entry name" value="LeuD/IlvD-like"/>
    <property type="match status" value="1"/>
</dbReference>
<dbReference type="PROSITE" id="PS00450">
    <property type="entry name" value="ACONITASE_1"/>
    <property type="match status" value="1"/>
</dbReference>
<dbReference type="PROSITE" id="PS01244">
    <property type="entry name" value="ACONITASE_2"/>
    <property type="match status" value="1"/>
</dbReference>
<organism>
    <name type="scientific">Rhizopus niveus</name>
    <dbReference type="NCBI Taxonomy" id="4844"/>
    <lineage>
        <taxon>Eukaryota</taxon>
        <taxon>Fungi</taxon>
        <taxon>Fungi incertae sedis</taxon>
        <taxon>Mucoromycota</taxon>
        <taxon>Mucoromycotina</taxon>
        <taxon>Mucoromycetes</taxon>
        <taxon>Mucorales</taxon>
        <taxon>Mucorineae</taxon>
        <taxon>Rhizopodaceae</taxon>
        <taxon>Rhizopus</taxon>
    </lineage>
</organism>
<feature type="chain" id="PRO_0000076889" description="3-isopropylmalate dehydratase">
    <location>
        <begin position="1"/>
        <end position="750"/>
    </location>
</feature>
<feature type="region of interest" description="Disordered" evidence="2">
    <location>
        <begin position="492"/>
        <end position="524"/>
    </location>
</feature>
<feature type="binding site" evidence="1">
    <location>
        <position position="353"/>
    </location>
    <ligand>
        <name>[4Fe-4S] cluster</name>
        <dbReference type="ChEBI" id="CHEBI:49883"/>
    </ligand>
</feature>
<feature type="binding site" evidence="1">
    <location>
        <position position="413"/>
    </location>
    <ligand>
        <name>[4Fe-4S] cluster</name>
        <dbReference type="ChEBI" id="CHEBI:49883"/>
    </ligand>
</feature>
<feature type="binding site" evidence="1">
    <location>
        <position position="416"/>
    </location>
    <ligand>
        <name>[4Fe-4S] cluster</name>
        <dbReference type="ChEBI" id="CHEBI:49883"/>
    </ligand>
</feature>
<accession>P55811</accession>